<comment type="function">
    <text evidence="1">Catalyzes a salvage reaction resulting in the formation of AMP, that is energically less costly than de novo synthesis.</text>
</comment>
<comment type="catalytic activity">
    <reaction evidence="1">
        <text>AMP + diphosphate = 5-phospho-alpha-D-ribose 1-diphosphate + adenine</text>
        <dbReference type="Rhea" id="RHEA:16609"/>
        <dbReference type="ChEBI" id="CHEBI:16708"/>
        <dbReference type="ChEBI" id="CHEBI:33019"/>
        <dbReference type="ChEBI" id="CHEBI:58017"/>
        <dbReference type="ChEBI" id="CHEBI:456215"/>
        <dbReference type="EC" id="2.4.2.7"/>
    </reaction>
</comment>
<comment type="pathway">
    <text evidence="1">Purine metabolism; AMP biosynthesis via salvage pathway; AMP from adenine: step 1/1.</text>
</comment>
<comment type="subunit">
    <text evidence="1">Homodimer.</text>
</comment>
<comment type="subcellular location">
    <subcellularLocation>
        <location evidence="1">Cytoplasm</location>
    </subcellularLocation>
</comment>
<comment type="similarity">
    <text evidence="1">Belongs to the purine/pyrimidine phosphoribosyltransferase family.</text>
</comment>
<dbReference type="EC" id="2.4.2.7" evidence="1"/>
<dbReference type="EMBL" id="CP000449">
    <property type="protein sequence ID" value="ABI65036.1"/>
    <property type="molecule type" value="Genomic_DNA"/>
</dbReference>
<dbReference type="RefSeq" id="WP_011642683.1">
    <property type="nucleotide sequence ID" value="NC_008347.1"/>
</dbReference>
<dbReference type="SMR" id="Q0ARQ1"/>
<dbReference type="STRING" id="394221.Mmar10_0743"/>
<dbReference type="KEGG" id="mmr:Mmar10_0743"/>
<dbReference type="eggNOG" id="COG0503">
    <property type="taxonomic scope" value="Bacteria"/>
</dbReference>
<dbReference type="HOGENOM" id="CLU_063339_3_0_5"/>
<dbReference type="OrthoDB" id="9803963at2"/>
<dbReference type="UniPathway" id="UPA00588">
    <property type="reaction ID" value="UER00646"/>
</dbReference>
<dbReference type="Proteomes" id="UP000001964">
    <property type="component" value="Chromosome"/>
</dbReference>
<dbReference type="GO" id="GO:0005737">
    <property type="term" value="C:cytoplasm"/>
    <property type="evidence" value="ECO:0007669"/>
    <property type="project" value="UniProtKB-SubCell"/>
</dbReference>
<dbReference type="GO" id="GO:0002055">
    <property type="term" value="F:adenine binding"/>
    <property type="evidence" value="ECO:0007669"/>
    <property type="project" value="TreeGrafter"/>
</dbReference>
<dbReference type="GO" id="GO:0003999">
    <property type="term" value="F:adenine phosphoribosyltransferase activity"/>
    <property type="evidence" value="ECO:0007669"/>
    <property type="project" value="UniProtKB-UniRule"/>
</dbReference>
<dbReference type="GO" id="GO:0016208">
    <property type="term" value="F:AMP binding"/>
    <property type="evidence" value="ECO:0007669"/>
    <property type="project" value="TreeGrafter"/>
</dbReference>
<dbReference type="GO" id="GO:0006168">
    <property type="term" value="P:adenine salvage"/>
    <property type="evidence" value="ECO:0007669"/>
    <property type="project" value="InterPro"/>
</dbReference>
<dbReference type="GO" id="GO:0044209">
    <property type="term" value="P:AMP salvage"/>
    <property type="evidence" value="ECO:0007669"/>
    <property type="project" value="UniProtKB-UniRule"/>
</dbReference>
<dbReference type="GO" id="GO:0006166">
    <property type="term" value="P:purine ribonucleoside salvage"/>
    <property type="evidence" value="ECO:0007669"/>
    <property type="project" value="UniProtKB-KW"/>
</dbReference>
<dbReference type="CDD" id="cd06223">
    <property type="entry name" value="PRTases_typeI"/>
    <property type="match status" value="1"/>
</dbReference>
<dbReference type="FunFam" id="3.40.50.2020:FF:000021">
    <property type="entry name" value="Adenine phosphoribosyltransferase"/>
    <property type="match status" value="1"/>
</dbReference>
<dbReference type="Gene3D" id="3.40.50.2020">
    <property type="match status" value="1"/>
</dbReference>
<dbReference type="HAMAP" id="MF_00004">
    <property type="entry name" value="Aden_phosphoribosyltr"/>
    <property type="match status" value="1"/>
</dbReference>
<dbReference type="InterPro" id="IPR005764">
    <property type="entry name" value="Ade_phspho_trans"/>
</dbReference>
<dbReference type="InterPro" id="IPR000836">
    <property type="entry name" value="PRibTrfase_dom"/>
</dbReference>
<dbReference type="InterPro" id="IPR029057">
    <property type="entry name" value="PRTase-like"/>
</dbReference>
<dbReference type="InterPro" id="IPR050054">
    <property type="entry name" value="UPRTase/APRTase"/>
</dbReference>
<dbReference type="NCBIfam" id="TIGR01090">
    <property type="entry name" value="apt"/>
    <property type="match status" value="1"/>
</dbReference>
<dbReference type="NCBIfam" id="NF002634">
    <property type="entry name" value="PRK02304.1-3"/>
    <property type="match status" value="1"/>
</dbReference>
<dbReference type="NCBIfam" id="NF002636">
    <property type="entry name" value="PRK02304.1-5"/>
    <property type="match status" value="1"/>
</dbReference>
<dbReference type="PANTHER" id="PTHR32315">
    <property type="entry name" value="ADENINE PHOSPHORIBOSYLTRANSFERASE"/>
    <property type="match status" value="1"/>
</dbReference>
<dbReference type="PANTHER" id="PTHR32315:SF3">
    <property type="entry name" value="ADENINE PHOSPHORIBOSYLTRANSFERASE"/>
    <property type="match status" value="1"/>
</dbReference>
<dbReference type="Pfam" id="PF00156">
    <property type="entry name" value="Pribosyltran"/>
    <property type="match status" value="1"/>
</dbReference>
<dbReference type="SUPFAM" id="SSF53271">
    <property type="entry name" value="PRTase-like"/>
    <property type="match status" value="1"/>
</dbReference>
<dbReference type="PROSITE" id="PS00103">
    <property type="entry name" value="PUR_PYR_PR_TRANSFER"/>
    <property type="match status" value="1"/>
</dbReference>
<protein>
    <recommendedName>
        <fullName evidence="1">Adenine phosphoribosyltransferase</fullName>
        <shortName evidence="1">APRT</shortName>
        <ecNumber evidence="1">2.4.2.7</ecNumber>
    </recommendedName>
</protein>
<accession>Q0ARQ1</accession>
<proteinExistence type="inferred from homology"/>
<reference key="1">
    <citation type="submission" date="2006-08" db="EMBL/GenBank/DDBJ databases">
        <title>Complete sequence of Maricaulis maris MCS10.</title>
        <authorList>
            <consortium name="US DOE Joint Genome Institute"/>
            <person name="Copeland A."/>
            <person name="Lucas S."/>
            <person name="Lapidus A."/>
            <person name="Barry K."/>
            <person name="Detter J.C."/>
            <person name="Glavina del Rio T."/>
            <person name="Hammon N."/>
            <person name="Israni S."/>
            <person name="Dalin E."/>
            <person name="Tice H."/>
            <person name="Pitluck S."/>
            <person name="Saunders E."/>
            <person name="Brettin T."/>
            <person name="Bruce D."/>
            <person name="Han C."/>
            <person name="Tapia R."/>
            <person name="Gilna P."/>
            <person name="Schmutz J."/>
            <person name="Larimer F."/>
            <person name="Land M."/>
            <person name="Hauser L."/>
            <person name="Kyrpides N."/>
            <person name="Mikhailova N."/>
            <person name="Viollier P."/>
            <person name="Stephens C."/>
            <person name="Richardson P."/>
        </authorList>
    </citation>
    <scope>NUCLEOTIDE SEQUENCE [LARGE SCALE GENOMIC DNA]</scope>
    <source>
        <strain>MCS10</strain>
    </source>
</reference>
<evidence type="ECO:0000255" key="1">
    <source>
        <dbReference type="HAMAP-Rule" id="MF_00004"/>
    </source>
</evidence>
<organism>
    <name type="scientific">Maricaulis maris (strain MCS10)</name>
    <name type="common">Caulobacter maris</name>
    <dbReference type="NCBI Taxonomy" id="394221"/>
    <lineage>
        <taxon>Bacteria</taxon>
        <taxon>Pseudomonadati</taxon>
        <taxon>Pseudomonadota</taxon>
        <taxon>Alphaproteobacteria</taxon>
        <taxon>Maricaulales</taxon>
        <taxon>Maricaulaceae</taxon>
        <taxon>Maricaulis</taxon>
    </lineage>
</organism>
<gene>
    <name evidence="1" type="primary">apt</name>
    <name type="ordered locus">Mmar10_0743</name>
</gene>
<keyword id="KW-0963">Cytoplasm</keyword>
<keyword id="KW-0328">Glycosyltransferase</keyword>
<keyword id="KW-0660">Purine salvage</keyword>
<keyword id="KW-1185">Reference proteome</keyword>
<keyword id="KW-0808">Transferase</keyword>
<feature type="chain" id="PRO_0000321367" description="Adenine phosphoribosyltransferase">
    <location>
        <begin position="1"/>
        <end position="175"/>
    </location>
</feature>
<name>APT_MARMM</name>
<sequence length="175" mass="18815">MDLKSAIRTIPDYPEPGIQFRDVTTLIGDARAFRVAIDRMVQPWAGAKIDKVAGTEARGFILGGAVAHQLSVGFVPVRKRGKLPWRTLREDYELEYGQDTIEIHVDAIAEGDRVLLVDDLIATGGTAEASIKLLQRAGATVVGATFIIDLPELGGAERIEAMGVPVSSLVAYEGT</sequence>